<reference key="1">
    <citation type="journal article" date="2003" name="J. Bacteriol.">
        <title>Complete genome sequence of the oral pathogenic bacterium Porphyromonas gingivalis strain W83.</title>
        <authorList>
            <person name="Nelson K.E."/>
            <person name="Fleischmann R.D."/>
            <person name="DeBoy R.T."/>
            <person name="Paulsen I.T."/>
            <person name="Fouts D.E."/>
            <person name="Eisen J.A."/>
            <person name="Daugherty S.C."/>
            <person name="Dodson R.J."/>
            <person name="Durkin A.S."/>
            <person name="Gwinn M.L."/>
            <person name="Haft D.H."/>
            <person name="Kolonay J.F."/>
            <person name="Nelson W.C."/>
            <person name="Mason T.M."/>
            <person name="Tallon L."/>
            <person name="Gray J."/>
            <person name="Granger D."/>
            <person name="Tettelin H."/>
            <person name="Dong H."/>
            <person name="Galvin J.L."/>
            <person name="Duncan M.J."/>
            <person name="Dewhirst F.E."/>
            <person name="Fraser C.M."/>
        </authorList>
    </citation>
    <scope>NUCLEOTIDE SEQUENCE [LARGE SCALE GENOMIC DNA]</scope>
    <source>
        <strain>ATCC BAA-308 / W83</strain>
    </source>
</reference>
<gene>
    <name evidence="1" type="primary">rplS</name>
    <name type="ordered locus">PG_0037</name>
</gene>
<name>RL19_PORGI</name>
<protein>
    <recommendedName>
        <fullName evidence="1">Large ribosomal subunit protein bL19</fullName>
    </recommendedName>
    <alternativeName>
        <fullName evidence="2">50S ribosomal protein L19</fullName>
    </alternativeName>
</protein>
<proteinExistence type="inferred from homology"/>
<accession>Q7MXW3</accession>
<dbReference type="EMBL" id="AE015924">
    <property type="protein sequence ID" value="AAQ65290.1"/>
    <property type="molecule type" value="Genomic_DNA"/>
</dbReference>
<dbReference type="RefSeq" id="WP_004583436.1">
    <property type="nucleotide sequence ID" value="NC_002950.2"/>
</dbReference>
<dbReference type="SMR" id="Q7MXW3"/>
<dbReference type="STRING" id="242619.PG_0037"/>
<dbReference type="EnsemblBacteria" id="AAQ65290">
    <property type="protein sequence ID" value="AAQ65290"/>
    <property type="gene ID" value="PG_0037"/>
</dbReference>
<dbReference type="GeneID" id="29255294"/>
<dbReference type="KEGG" id="pgi:PG_0037"/>
<dbReference type="eggNOG" id="COG0335">
    <property type="taxonomic scope" value="Bacteria"/>
</dbReference>
<dbReference type="HOGENOM" id="CLU_103507_2_2_10"/>
<dbReference type="Proteomes" id="UP000000588">
    <property type="component" value="Chromosome"/>
</dbReference>
<dbReference type="GO" id="GO:0022625">
    <property type="term" value="C:cytosolic large ribosomal subunit"/>
    <property type="evidence" value="ECO:0007669"/>
    <property type="project" value="TreeGrafter"/>
</dbReference>
<dbReference type="GO" id="GO:0003735">
    <property type="term" value="F:structural constituent of ribosome"/>
    <property type="evidence" value="ECO:0007669"/>
    <property type="project" value="InterPro"/>
</dbReference>
<dbReference type="GO" id="GO:0006412">
    <property type="term" value="P:translation"/>
    <property type="evidence" value="ECO:0007669"/>
    <property type="project" value="UniProtKB-UniRule"/>
</dbReference>
<dbReference type="FunFam" id="2.30.30.790:FF:000001">
    <property type="entry name" value="50S ribosomal protein L19"/>
    <property type="match status" value="1"/>
</dbReference>
<dbReference type="Gene3D" id="2.30.30.790">
    <property type="match status" value="1"/>
</dbReference>
<dbReference type="HAMAP" id="MF_00402">
    <property type="entry name" value="Ribosomal_bL19"/>
    <property type="match status" value="1"/>
</dbReference>
<dbReference type="InterPro" id="IPR001857">
    <property type="entry name" value="Ribosomal_bL19"/>
</dbReference>
<dbReference type="InterPro" id="IPR018257">
    <property type="entry name" value="Ribosomal_bL19_CS"/>
</dbReference>
<dbReference type="InterPro" id="IPR038657">
    <property type="entry name" value="Ribosomal_bL19_sf"/>
</dbReference>
<dbReference type="InterPro" id="IPR008991">
    <property type="entry name" value="Translation_prot_SH3-like_sf"/>
</dbReference>
<dbReference type="NCBIfam" id="TIGR01024">
    <property type="entry name" value="rplS_bact"/>
    <property type="match status" value="1"/>
</dbReference>
<dbReference type="PANTHER" id="PTHR15680:SF9">
    <property type="entry name" value="LARGE RIBOSOMAL SUBUNIT PROTEIN BL19M"/>
    <property type="match status" value="1"/>
</dbReference>
<dbReference type="PANTHER" id="PTHR15680">
    <property type="entry name" value="RIBOSOMAL PROTEIN L19"/>
    <property type="match status" value="1"/>
</dbReference>
<dbReference type="Pfam" id="PF01245">
    <property type="entry name" value="Ribosomal_L19"/>
    <property type="match status" value="1"/>
</dbReference>
<dbReference type="PIRSF" id="PIRSF002191">
    <property type="entry name" value="Ribosomal_L19"/>
    <property type="match status" value="1"/>
</dbReference>
<dbReference type="PRINTS" id="PR00061">
    <property type="entry name" value="RIBOSOMALL19"/>
</dbReference>
<dbReference type="SUPFAM" id="SSF50104">
    <property type="entry name" value="Translation proteins SH3-like domain"/>
    <property type="match status" value="1"/>
</dbReference>
<dbReference type="PROSITE" id="PS01015">
    <property type="entry name" value="RIBOSOMAL_L19"/>
    <property type="match status" value="1"/>
</dbReference>
<comment type="function">
    <text evidence="1">This protein is located at the 30S-50S ribosomal subunit interface and may play a role in the structure and function of the aminoacyl-tRNA binding site.</text>
</comment>
<comment type="similarity">
    <text evidence="1">Belongs to the bacterial ribosomal protein bL19 family.</text>
</comment>
<organism>
    <name type="scientific">Porphyromonas gingivalis (strain ATCC BAA-308 / W83)</name>
    <dbReference type="NCBI Taxonomy" id="242619"/>
    <lineage>
        <taxon>Bacteria</taxon>
        <taxon>Pseudomonadati</taxon>
        <taxon>Bacteroidota</taxon>
        <taxon>Bacteroidia</taxon>
        <taxon>Bacteroidales</taxon>
        <taxon>Porphyromonadaceae</taxon>
        <taxon>Porphyromonas</taxon>
    </lineage>
</organism>
<feature type="chain" id="PRO_0000163505" description="Large ribosomal subunit protein bL19">
    <location>
        <begin position="1"/>
        <end position="121"/>
    </location>
</feature>
<keyword id="KW-1185">Reference proteome</keyword>
<keyword id="KW-0687">Ribonucleoprotein</keyword>
<keyword id="KW-0689">Ribosomal protein</keyword>
<evidence type="ECO:0000255" key="1">
    <source>
        <dbReference type="HAMAP-Rule" id="MF_00402"/>
    </source>
</evidence>
<evidence type="ECO:0000305" key="2"/>
<sequence length="121" mass="14088">MDFIKIVNEEFKSGKEHPKFNSGDTITVEYRIKEGNKERIQKYRGVVIRISGHGDKKRFTVRKISDGIGVERIFPIESPFIENITVEKYGKVRRAKLYYLRGLTGKKARIKERRVALSSKD</sequence>